<feature type="chain" id="PRO_0000385000" description="Protein sey1">
    <location>
        <begin position="1"/>
        <end position="764"/>
    </location>
</feature>
<feature type="topological domain" description="Cytoplasmic" evidence="1">
    <location>
        <begin position="1"/>
        <end position="659"/>
    </location>
</feature>
<feature type="transmembrane region" description="Helical" evidence="1">
    <location>
        <begin position="660"/>
        <end position="680"/>
    </location>
</feature>
<feature type="topological domain" description="Lumenal" evidence="1">
    <location>
        <begin position="681"/>
        <end position="683"/>
    </location>
</feature>
<feature type="transmembrane region" description="Helical" evidence="1">
    <location>
        <begin position="684"/>
        <end position="704"/>
    </location>
</feature>
<feature type="topological domain" description="Cytoplasmic" evidence="1">
    <location>
        <begin position="705"/>
        <end position="764"/>
    </location>
</feature>
<feature type="domain" description="GB1/RHD3-type G" evidence="2">
    <location>
        <begin position="31"/>
        <end position="246"/>
    </location>
</feature>
<feature type="region of interest" description="Disordered" evidence="3">
    <location>
        <begin position="731"/>
        <end position="764"/>
    </location>
</feature>
<feature type="coiled-coil region" evidence="1">
    <location>
        <begin position="302"/>
        <end position="322"/>
    </location>
</feature>
<feature type="coiled-coil region" evidence="1">
    <location>
        <begin position="421"/>
        <end position="443"/>
    </location>
</feature>
<feature type="compositionally biased region" description="Polar residues" evidence="3">
    <location>
        <begin position="736"/>
        <end position="754"/>
    </location>
</feature>
<feature type="binding site" evidence="1">
    <location>
        <begin position="41"/>
        <end position="48"/>
    </location>
    <ligand>
        <name>GTP</name>
        <dbReference type="ChEBI" id="CHEBI:37565"/>
    </ligand>
</feature>
<comment type="function">
    <text evidence="1">Cooperates with the reticulon proteins and tubule-shaping DP1 family proteins to generate and maintain the structure of the tubular endoplasmic reticulum network. Has GTPase activity, which is required for its function in ER organization.</text>
</comment>
<comment type="subcellular location">
    <subcellularLocation>
        <location evidence="1">Endoplasmic reticulum membrane</location>
        <topology evidence="1">Multi-pass membrane protein</topology>
    </subcellularLocation>
    <text evidence="1">Enriched in the cortical ER. Concentrated in punctae along the ER tubules.</text>
</comment>
<comment type="similarity">
    <text evidence="2">Belongs to the TRAFAC class dynamin-like GTPase superfamily. GB1/RHD3 GTPase family. RHD3 subfamily.</text>
</comment>
<gene>
    <name type="primary">sey1</name>
    <name type="ORF">SJAG_02595</name>
</gene>
<keyword id="KW-0175">Coiled coil</keyword>
<keyword id="KW-0256">Endoplasmic reticulum</keyword>
<keyword id="KW-0342">GTP-binding</keyword>
<keyword id="KW-0378">Hydrolase</keyword>
<keyword id="KW-0472">Membrane</keyword>
<keyword id="KW-0547">Nucleotide-binding</keyword>
<keyword id="KW-1185">Reference proteome</keyword>
<keyword id="KW-0812">Transmembrane</keyword>
<keyword id="KW-1133">Transmembrane helix</keyword>
<organism>
    <name type="scientific">Schizosaccharomyces japonicus (strain yFS275 / FY16936)</name>
    <name type="common">Fission yeast</name>
    <dbReference type="NCBI Taxonomy" id="402676"/>
    <lineage>
        <taxon>Eukaryota</taxon>
        <taxon>Fungi</taxon>
        <taxon>Dikarya</taxon>
        <taxon>Ascomycota</taxon>
        <taxon>Taphrinomycotina</taxon>
        <taxon>Schizosaccharomycetes</taxon>
        <taxon>Schizosaccharomycetales</taxon>
        <taxon>Schizosaccharomycetaceae</taxon>
        <taxon>Schizosaccharomyces</taxon>
    </lineage>
</organism>
<evidence type="ECO:0000255" key="1">
    <source>
        <dbReference type="HAMAP-Rule" id="MF_03109"/>
    </source>
</evidence>
<evidence type="ECO:0000255" key="2">
    <source>
        <dbReference type="PROSITE-ProRule" id="PRU01052"/>
    </source>
</evidence>
<evidence type="ECO:0000256" key="3">
    <source>
        <dbReference type="SAM" id="MobiDB-lite"/>
    </source>
</evidence>
<proteinExistence type="inferred from homology"/>
<accession>B6K0N7</accession>
<protein>
    <recommendedName>
        <fullName evidence="1">Protein sey1</fullName>
        <ecNumber evidence="1">3.6.5.-</ecNumber>
    </recommendedName>
</protein>
<sequence>MQQSAQLITENKEFNEDFPRFLKDVGLDNVGFDYHVVAVLGSQSTGKSTLLNKLFGTQFSTMDTVRRQQTTKGIWVSRGKDSSILIMDVEGTDGRERGDDQDFERKSALFSIATSEVIIVNMWENQIGLYQGSNMTLLKTVFEVNLQLFHENIERSRLQFVIRDFLGSTSLDNLSETLMTDLNRTWASISKPEGLENSVITDFFDVDFSALPHKVLCAEAFDEETDKLREQFLDEKNPKYLFKPCYHKRIPADGFPLYTQGIWQLIQNNRDLDLPTQQQLLAQYRCDEFIAEAMVSFDEQCEELLTFLKTHQSIENLLQRLEAIQTSTFSIFDENARRYQSEVYTKKRQELDRMMKTRLAVPIQRYLAAIHKELVAGFPERIATLVKDACFKDVARVTVSEMVSVMHSEAAALQKEGFVCDAEQTVETLRVELLQLVRSMREERLAQISAKLMVQFEQEFADAIDVSFHHLTKDIWDNIMHKFDELREKVLDEMLRSLNEYIDDEMDEDAELLRTKHMFKLKRSTWLVLRRTLENETAEPILQQRLRTHFEDSFRYDSRGIPKMWKKSDILENDFNKSLQDTLQLIDVLAIVRLKDGSVPTVDVPLAEEGEDTASNLEADTFFTFLNRKKKANIHVSVKRAADLVFLDCKRSIISTATRVPGYFWALLAVLGWNEFVSVLKNPVLLTLLLIVVSFLFILVQTGLAGPVKAFAERSVRNAVNSMGEKLAEKLDDYRSTSPASETTSGRVISAENSSVDEKVSTTP</sequence>
<dbReference type="EC" id="3.6.5.-" evidence="1"/>
<dbReference type="EMBL" id="KE651166">
    <property type="protein sequence ID" value="EEB07508.1"/>
    <property type="molecule type" value="Genomic_DNA"/>
</dbReference>
<dbReference type="RefSeq" id="XP_002173801.1">
    <property type="nucleotide sequence ID" value="XM_002173765.2"/>
</dbReference>
<dbReference type="SMR" id="B6K0N7"/>
<dbReference type="STRING" id="402676.B6K0N7"/>
<dbReference type="EnsemblFungi" id="EEB07508">
    <property type="protein sequence ID" value="EEB07508"/>
    <property type="gene ID" value="SJAG_02595"/>
</dbReference>
<dbReference type="GeneID" id="7047701"/>
<dbReference type="JaponicusDB" id="SJAG_02595">
    <property type="gene designation" value="sey1"/>
</dbReference>
<dbReference type="VEuPathDB" id="FungiDB:SJAG_02595"/>
<dbReference type="eggNOG" id="KOG2203">
    <property type="taxonomic scope" value="Eukaryota"/>
</dbReference>
<dbReference type="HOGENOM" id="CLU_011270_0_0_1"/>
<dbReference type="OMA" id="PIIKMTE"/>
<dbReference type="OrthoDB" id="1597724at2759"/>
<dbReference type="Proteomes" id="UP000001744">
    <property type="component" value="Unassembled WGS sequence"/>
</dbReference>
<dbReference type="GO" id="GO:0005783">
    <property type="term" value="C:endoplasmic reticulum"/>
    <property type="evidence" value="ECO:0000318"/>
    <property type="project" value="GO_Central"/>
</dbReference>
<dbReference type="GO" id="GO:0005789">
    <property type="term" value="C:endoplasmic reticulum membrane"/>
    <property type="evidence" value="ECO:0007669"/>
    <property type="project" value="UniProtKB-SubCell"/>
</dbReference>
<dbReference type="GO" id="GO:0005525">
    <property type="term" value="F:GTP binding"/>
    <property type="evidence" value="ECO:0007669"/>
    <property type="project" value="UniProtKB-UniRule"/>
</dbReference>
<dbReference type="GO" id="GO:0003924">
    <property type="term" value="F:GTPase activity"/>
    <property type="evidence" value="ECO:0000318"/>
    <property type="project" value="GO_Central"/>
</dbReference>
<dbReference type="GO" id="GO:0016320">
    <property type="term" value="P:endoplasmic reticulum membrane fusion"/>
    <property type="evidence" value="ECO:0000318"/>
    <property type="project" value="GO_Central"/>
</dbReference>
<dbReference type="CDD" id="cd01851">
    <property type="entry name" value="GBP"/>
    <property type="match status" value="1"/>
</dbReference>
<dbReference type="FunFam" id="3.40.50.300:FF:000727">
    <property type="entry name" value="Protein SEY1 homolog"/>
    <property type="match status" value="1"/>
</dbReference>
<dbReference type="Gene3D" id="3.40.50.300">
    <property type="entry name" value="P-loop containing nucleotide triphosphate hydrolases"/>
    <property type="match status" value="1"/>
</dbReference>
<dbReference type="HAMAP" id="MF_03109">
    <property type="entry name" value="Sey1"/>
    <property type="match status" value="1"/>
</dbReference>
<dbReference type="InterPro" id="IPR030386">
    <property type="entry name" value="G_GB1_RHD3_dom"/>
</dbReference>
<dbReference type="InterPro" id="IPR027417">
    <property type="entry name" value="P-loop_NTPase"/>
</dbReference>
<dbReference type="InterPro" id="IPR008803">
    <property type="entry name" value="RHD3/Sey1"/>
</dbReference>
<dbReference type="InterPro" id="IPR046758">
    <property type="entry name" value="Sey1/RHD3-like_3HB"/>
</dbReference>
<dbReference type="PANTHER" id="PTHR45923">
    <property type="entry name" value="PROTEIN SEY1"/>
    <property type="match status" value="1"/>
</dbReference>
<dbReference type="PANTHER" id="PTHR45923:SF2">
    <property type="entry name" value="PROTEIN SEY1"/>
    <property type="match status" value="1"/>
</dbReference>
<dbReference type="Pfam" id="PF05879">
    <property type="entry name" value="RHD3_GTPase"/>
    <property type="match status" value="1"/>
</dbReference>
<dbReference type="Pfam" id="PF20428">
    <property type="entry name" value="Sey1_3HB"/>
    <property type="match status" value="1"/>
</dbReference>
<dbReference type="SUPFAM" id="SSF52540">
    <property type="entry name" value="P-loop containing nucleoside triphosphate hydrolases"/>
    <property type="match status" value="1"/>
</dbReference>
<dbReference type="PROSITE" id="PS51715">
    <property type="entry name" value="G_GB1_RHD3"/>
    <property type="match status" value="1"/>
</dbReference>
<name>SEY1_SCHJY</name>
<reference key="1">
    <citation type="journal article" date="2011" name="Science">
        <title>Comparative functional genomics of the fission yeasts.</title>
        <authorList>
            <person name="Rhind N."/>
            <person name="Chen Z."/>
            <person name="Yassour M."/>
            <person name="Thompson D.A."/>
            <person name="Haas B.J."/>
            <person name="Habib N."/>
            <person name="Wapinski I."/>
            <person name="Roy S."/>
            <person name="Lin M.F."/>
            <person name="Heiman D.I."/>
            <person name="Young S.K."/>
            <person name="Furuya K."/>
            <person name="Guo Y."/>
            <person name="Pidoux A."/>
            <person name="Chen H.M."/>
            <person name="Robbertse B."/>
            <person name="Goldberg J.M."/>
            <person name="Aoki K."/>
            <person name="Bayne E.H."/>
            <person name="Berlin A.M."/>
            <person name="Desjardins C.A."/>
            <person name="Dobbs E."/>
            <person name="Dukaj L."/>
            <person name="Fan L."/>
            <person name="FitzGerald M.G."/>
            <person name="French C."/>
            <person name="Gujja S."/>
            <person name="Hansen K."/>
            <person name="Keifenheim D."/>
            <person name="Levin J.Z."/>
            <person name="Mosher R.A."/>
            <person name="Mueller C.A."/>
            <person name="Pfiffner J."/>
            <person name="Priest M."/>
            <person name="Russ C."/>
            <person name="Smialowska A."/>
            <person name="Swoboda P."/>
            <person name="Sykes S.M."/>
            <person name="Vaughn M."/>
            <person name="Vengrova S."/>
            <person name="Yoder R."/>
            <person name="Zeng Q."/>
            <person name="Allshire R."/>
            <person name="Baulcombe D."/>
            <person name="Birren B.W."/>
            <person name="Brown W."/>
            <person name="Ekwall K."/>
            <person name="Kellis M."/>
            <person name="Leatherwood J."/>
            <person name="Levin H."/>
            <person name="Margalit H."/>
            <person name="Martienssen R."/>
            <person name="Nieduszynski C.A."/>
            <person name="Spatafora J.W."/>
            <person name="Friedman N."/>
            <person name="Dalgaard J.Z."/>
            <person name="Baumann P."/>
            <person name="Niki H."/>
            <person name="Regev A."/>
            <person name="Nusbaum C."/>
        </authorList>
    </citation>
    <scope>NUCLEOTIDE SEQUENCE [LARGE SCALE GENOMIC DNA]</scope>
    <source>
        <strain>yFS275 / FY16936</strain>
    </source>
</reference>